<sequence>MNRPYNFSAGPAAMPQEVLTEAAAEMLDWHGSGMSVMEMSHRGREFVSIYEQAHLDLRELLAVPDSFKILFMQGGGLAENAIVPLNLSARVSPAGAAGSADFVVTGGWSLKSQQEARKYCTVNIAASNESDGHTTLPGPASWQLSHGASYVHICSNETIHGVEYHTLPDLQALGSEAALVVDCSSHVASRPIDWSRVGLAFAGAQKNLGPAGLTLVVVREDLLGHALAVCPSAFNYKTVADNQSMFNTPPTYAIYIAGLVFQWLKRQGGIAAMEARNQAKAALLYDAIDNSQLYYNKVAPNCRSRMNVPFFLRDESLNDAFLAGAREHGLLQLKGHKSVGGMRASIYNAMPMEGVQALVNYLHEFQKRRS</sequence>
<organism>
    <name type="scientific">Albidiferax ferrireducens (strain ATCC BAA-621 / DSM 15236 / T118)</name>
    <name type="common">Rhodoferax ferrireducens</name>
    <dbReference type="NCBI Taxonomy" id="338969"/>
    <lineage>
        <taxon>Bacteria</taxon>
        <taxon>Pseudomonadati</taxon>
        <taxon>Pseudomonadota</taxon>
        <taxon>Betaproteobacteria</taxon>
        <taxon>Burkholderiales</taxon>
        <taxon>Comamonadaceae</taxon>
        <taxon>Rhodoferax</taxon>
    </lineage>
</organism>
<dbReference type="EC" id="2.6.1.52" evidence="1"/>
<dbReference type="EMBL" id="CP000267">
    <property type="protein sequence ID" value="ABD69302.1"/>
    <property type="molecule type" value="Genomic_DNA"/>
</dbReference>
<dbReference type="RefSeq" id="WP_011463870.1">
    <property type="nucleotide sequence ID" value="NC_007908.1"/>
</dbReference>
<dbReference type="SMR" id="Q21Y51"/>
<dbReference type="STRING" id="338969.Rfer_1570"/>
<dbReference type="KEGG" id="rfr:Rfer_1570"/>
<dbReference type="eggNOG" id="COG1932">
    <property type="taxonomic scope" value="Bacteria"/>
</dbReference>
<dbReference type="HOGENOM" id="CLU_034866_0_2_4"/>
<dbReference type="OrthoDB" id="9809412at2"/>
<dbReference type="UniPathway" id="UPA00135">
    <property type="reaction ID" value="UER00197"/>
</dbReference>
<dbReference type="UniPathway" id="UPA00244">
    <property type="reaction ID" value="UER00311"/>
</dbReference>
<dbReference type="Proteomes" id="UP000008332">
    <property type="component" value="Chromosome"/>
</dbReference>
<dbReference type="GO" id="GO:0005737">
    <property type="term" value="C:cytoplasm"/>
    <property type="evidence" value="ECO:0007669"/>
    <property type="project" value="UniProtKB-SubCell"/>
</dbReference>
<dbReference type="GO" id="GO:0004648">
    <property type="term" value="F:O-phospho-L-serine:2-oxoglutarate aminotransferase activity"/>
    <property type="evidence" value="ECO:0007669"/>
    <property type="project" value="UniProtKB-UniRule"/>
</dbReference>
<dbReference type="GO" id="GO:0030170">
    <property type="term" value="F:pyridoxal phosphate binding"/>
    <property type="evidence" value="ECO:0007669"/>
    <property type="project" value="UniProtKB-UniRule"/>
</dbReference>
<dbReference type="GO" id="GO:0006564">
    <property type="term" value="P:L-serine biosynthetic process"/>
    <property type="evidence" value="ECO:0007669"/>
    <property type="project" value="UniProtKB-UniRule"/>
</dbReference>
<dbReference type="GO" id="GO:0008615">
    <property type="term" value="P:pyridoxine biosynthetic process"/>
    <property type="evidence" value="ECO:0007669"/>
    <property type="project" value="UniProtKB-UniRule"/>
</dbReference>
<dbReference type="FunFam" id="3.40.640.10:FF:000010">
    <property type="entry name" value="Phosphoserine aminotransferase"/>
    <property type="match status" value="1"/>
</dbReference>
<dbReference type="FunFam" id="3.90.1150.10:FF:000006">
    <property type="entry name" value="Phosphoserine aminotransferase"/>
    <property type="match status" value="1"/>
</dbReference>
<dbReference type="Gene3D" id="3.90.1150.10">
    <property type="entry name" value="Aspartate Aminotransferase, domain 1"/>
    <property type="match status" value="1"/>
</dbReference>
<dbReference type="Gene3D" id="3.40.640.10">
    <property type="entry name" value="Type I PLP-dependent aspartate aminotransferase-like (Major domain)"/>
    <property type="match status" value="1"/>
</dbReference>
<dbReference type="HAMAP" id="MF_00160">
    <property type="entry name" value="SerC_aminotrans_5"/>
    <property type="match status" value="1"/>
</dbReference>
<dbReference type="InterPro" id="IPR000192">
    <property type="entry name" value="Aminotrans_V_dom"/>
</dbReference>
<dbReference type="InterPro" id="IPR020578">
    <property type="entry name" value="Aminotrans_V_PyrdxlP_BS"/>
</dbReference>
<dbReference type="InterPro" id="IPR022278">
    <property type="entry name" value="Pser_aminoTfrase"/>
</dbReference>
<dbReference type="InterPro" id="IPR015424">
    <property type="entry name" value="PyrdxlP-dep_Trfase"/>
</dbReference>
<dbReference type="InterPro" id="IPR015421">
    <property type="entry name" value="PyrdxlP-dep_Trfase_major"/>
</dbReference>
<dbReference type="InterPro" id="IPR015422">
    <property type="entry name" value="PyrdxlP-dep_Trfase_small"/>
</dbReference>
<dbReference type="NCBIfam" id="NF003764">
    <property type="entry name" value="PRK05355.1"/>
    <property type="match status" value="1"/>
</dbReference>
<dbReference type="NCBIfam" id="TIGR01364">
    <property type="entry name" value="serC_1"/>
    <property type="match status" value="1"/>
</dbReference>
<dbReference type="PANTHER" id="PTHR43247">
    <property type="entry name" value="PHOSPHOSERINE AMINOTRANSFERASE"/>
    <property type="match status" value="1"/>
</dbReference>
<dbReference type="PANTHER" id="PTHR43247:SF1">
    <property type="entry name" value="PHOSPHOSERINE AMINOTRANSFERASE"/>
    <property type="match status" value="1"/>
</dbReference>
<dbReference type="Pfam" id="PF00266">
    <property type="entry name" value="Aminotran_5"/>
    <property type="match status" value="1"/>
</dbReference>
<dbReference type="PIRSF" id="PIRSF000525">
    <property type="entry name" value="SerC"/>
    <property type="match status" value="1"/>
</dbReference>
<dbReference type="SUPFAM" id="SSF53383">
    <property type="entry name" value="PLP-dependent transferases"/>
    <property type="match status" value="1"/>
</dbReference>
<dbReference type="PROSITE" id="PS00595">
    <property type="entry name" value="AA_TRANSFER_CLASS_5"/>
    <property type="match status" value="1"/>
</dbReference>
<keyword id="KW-0028">Amino-acid biosynthesis</keyword>
<keyword id="KW-0032">Aminotransferase</keyword>
<keyword id="KW-0963">Cytoplasm</keyword>
<keyword id="KW-0663">Pyridoxal phosphate</keyword>
<keyword id="KW-0664">Pyridoxine biosynthesis</keyword>
<keyword id="KW-1185">Reference proteome</keyword>
<keyword id="KW-0718">Serine biosynthesis</keyword>
<keyword id="KW-0808">Transferase</keyword>
<accession>Q21Y51</accession>
<proteinExistence type="inferred from homology"/>
<protein>
    <recommendedName>
        <fullName evidence="1">Phosphoserine aminotransferase</fullName>
        <ecNumber evidence="1">2.6.1.52</ecNumber>
    </recommendedName>
    <alternativeName>
        <fullName evidence="1">Phosphohydroxythreonine aminotransferase</fullName>
        <shortName evidence="1">PSAT</shortName>
    </alternativeName>
</protein>
<reference key="1">
    <citation type="submission" date="2006-02" db="EMBL/GenBank/DDBJ databases">
        <title>Complete sequence of chromosome of Rhodoferax ferrireducens DSM 15236.</title>
        <authorList>
            <person name="Copeland A."/>
            <person name="Lucas S."/>
            <person name="Lapidus A."/>
            <person name="Barry K."/>
            <person name="Detter J.C."/>
            <person name="Glavina del Rio T."/>
            <person name="Hammon N."/>
            <person name="Israni S."/>
            <person name="Pitluck S."/>
            <person name="Brettin T."/>
            <person name="Bruce D."/>
            <person name="Han C."/>
            <person name="Tapia R."/>
            <person name="Gilna P."/>
            <person name="Kiss H."/>
            <person name="Schmutz J."/>
            <person name="Larimer F."/>
            <person name="Land M."/>
            <person name="Kyrpides N."/>
            <person name="Ivanova N."/>
            <person name="Richardson P."/>
        </authorList>
    </citation>
    <scope>NUCLEOTIDE SEQUENCE [LARGE SCALE GENOMIC DNA]</scope>
    <source>
        <strain>ATCC BAA-621 / DSM 15236 / T118</strain>
    </source>
</reference>
<comment type="function">
    <text evidence="1">Catalyzes the reversible conversion of 3-phosphohydroxypyruvate to phosphoserine and of 3-hydroxy-2-oxo-4-phosphonooxybutanoate to phosphohydroxythreonine.</text>
</comment>
<comment type="catalytic activity">
    <reaction evidence="1">
        <text>O-phospho-L-serine + 2-oxoglutarate = 3-phosphooxypyruvate + L-glutamate</text>
        <dbReference type="Rhea" id="RHEA:14329"/>
        <dbReference type="ChEBI" id="CHEBI:16810"/>
        <dbReference type="ChEBI" id="CHEBI:18110"/>
        <dbReference type="ChEBI" id="CHEBI:29985"/>
        <dbReference type="ChEBI" id="CHEBI:57524"/>
        <dbReference type="EC" id="2.6.1.52"/>
    </reaction>
</comment>
<comment type="catalytic activity">
    <reaction evidence="1">
        <text>4-(phosphooxy)-L-threonine + 2-oxoglutarate = (R)-3-hydroxy-2-oxo-4-phosphooxybutanoate + L-glutamate</text>
        <dbReference type="Rhea" id="RHEA:16573"/>
        <dbReference type="ChEBI" id="CHEBI:16810"/>
        <dbReference type="ChEBI" id="CHEBI:29985"/>
        <dbReference type="ChEBI" id="CHEBI:58452"/>
        <dbReference type="ChEBI" id="CHEBI:58538"/>
        <dbReference type="EC" id="2.6.1.52"/>
    </reaction>
</comment>
<comment type="cofactor">
    <cofactor evidence="1">
        <name>pyridoxal 5'-phosphate</name>
        <dbReference type="ChEBI" id="CHEBI:597326"/>
    </cofactor>
    <text evidence="1">Binds 1 pyridoxal phosphate per subunit.</text>
</comment>
<comment type="pathway">
    <text evidence="1">Amino-acid biosynthesis; L-serine biosynthesis; L-serine from 3-phospho-D-glycerate: step 2/3.</text>
</comment>
<comment type="pathway">
    <text evidence="1">Cofactor biosynthesis; pyridoxine 5'-phosphate biosynthesis; pyridoxine 5'-phosphate from D-erythrose 4-phosphate: step 3/5.</text>
</comment>
<comment type="subunit">
    <text evidence="1">Homodimer.</text>
</comment>
<comment type="subcellular location">
    <subcellularLocation>
        <location evidence="1">Cytoplasm</location>
    </subcellularLocation>
</comment>
<comment type="similarity">
    <text evidence="1">Belongs to the class-V pyridoxal-phosphate-dependent aminotransferase family. SerC subfamily.</text>
</comment>
<feature type="chain" id="PRO_1000076909" description="Phosphoserine aminotransferase">
    <location>
        <begin position="1"/>
        <end position="370"/>
    </location>
</feature>
<feature type="binding site" evidence="1">
    <location>
        <position position="42"/>
    </location>
    <ligand>
        <name>L-glutamate</name>
        <dbReference type="ChEBI" id="CHEBI:29985"/>
    </ligand>
</feature>
<feature type="binding site" evidence="1">
    <location>
        <position position="108"/>
    </location>
    <ligand>
        <name>pyridoxal 5'-phosphate</name>
        <dbReference type="ChEBI" id="CHEBI:597326"/>
    </ligand>
</feature>
<feature type="binding site" evidence="1">
    <location>
        <position position="158"/>
    </location>
    <ligand>
        <name>pyridoxal 5'-phosphate</name>
        <dbReference type="ChEBI" id="CHEBI:597326"/>
    </ligand>
</feature>
<feature type="binding site" evidence="1">
    <location>
        <position position="182"/>
    </location>
    <ligand>
        <name>pyridoxal 5'-phosphate</name>
        <dbReference type="ChEBI" id="CHEBI:597326"/>
    </ligand>
</feature>
<feature type="binding site" evidence="1">
    <location>
        <position position="205"/>
    </location>
    <ligand>
        <name>pyridoxal 5'-phosphate</name>
        <dbReference type="ChEBI" id="CHEBI:597326"/>
    </ligand>
</feature>
<feature type="binding site" evidence="1">
    <location>
        <begin position="247"/>
        <end position="248"/>
    </location>
    <ligand>
        <name>pyridoxal 5'-phosphate</name>
        <dbReference type="ChEBI" id="CHEBI:597326"/>
    </ligand>
</feature>
<feature type="modified residue" description="N6-(pyridoxal phosphate)lysine" evidence="1">
    <location>
        <position position="206"/>
    </location>
</feature>
<evidence type="ECO:0000255" key="1">
    <source>
        <dbReference type="HAMAP-Rule" id="MF_00160"/>
    </source>
</evidence>
<name>SERC_ALBFT</name>
<gene>
    <name evidence="1" type="primary">serC</name>
    <name type="ordered locus">Rfer_1570</name>
</gene>